<proteinExistence type="inferred from homology"/>
<sequence>MSKAMGETLGRLEAVIHDRLAAGEAEASYVASLAAKGRGKIAQKLGEEAVEAVIAAVSEDDPALIGEASDLVFHLSILLAERGLTWDAIAAELDRRHGTSGHTEKAARA</sequence>
<comment type="catalytic activity">
    <reaction evidence="1">
        <text>1-(5-phospho-beta-D-ribosyl)-ATP + H2O = 1-(5-phospho-beta-D-ribosyl)-5'-AMP + diphosphate + H(+)</text>
        <dbReference type="Rhea" id="RHEA:22828"/>
        <dbReference type="ChEBI" id="CHEBI:15377"/>
        <dbReference type="ChEBI" id="CHEBI:15378"/>
        <dbReference type="ChEBI" id="CHEBI:33019"/>
        <dbReference type="ChEBI" id="CHEBI:59457"/>
        <dbReference type="ChEBI" id="CHEBI:73183"/>
        <dbReference type="EC" id="3.6.1.31"/>
    </reaction>
</comment>
<comment type="pathway">
    <text evidence="1">Amino-acid biosynthesis; L-histidine biosynthesis; L-histidine from 5-phospho-alpha-D-ribose 1-diphosphate: step 2/9.</text>
</comment>
<comment type="subcellular location">
    <subcellularLocation>
        <location evidence="1">Cytoplasm</location>
    </subcellularLocation>
</comment>
<comment type="similarity">
    <text evidence="1">Belongs to the PRA-PH family.</text>
</comment>
<protein>
    <recommendedName>
        <fullName evidence="1">Phosphoribosyl-ATP pyrophosphatase</fullName>
        <shortName evidence="1">PRA-PH</shortName>
        <ecNumber evidence="1">3.6.1.31</ecNumber>
    </recommendedName>
</protein>
<feature type="chain" id="PRO_0000319666" description="Phosphoribosyl-ATP pyrophosphatase">
    <location>
        <begin position="1"/>
        <end position="109"/>
    </location>
</feature>
<organism>
    <name type="scientific">Sphingopyxis alaskensis (strain DSM 13593 / LMG 18877 / RB2256)</name>
    <name type="common">Sphingomonas alaskensis</name>
    <dbReference type="NCBI Taxonomy" id="317655"/>
    <lineage>
        <taxon>Bacteria</taxon>
        <taxon>Pseudomonadati</taxon>
        <taxon>Pseudomonadota</taxon>
        <taxon>Alphaproteobacteria</taxon>
        <taxon>Sphingomonadales</taxon>
        <taxon>Sphingomonadaceae</taxon>
        <taxon>Sphingopyxis</taxon>
    </lineage>
</organism>
<evidence type="ECO:0000255" key="1">
    <source>
        <dbReference type="HAMAP-Rule" id="MF_01020"/>
    </source>
</evidence>
<name>HIS2_SPHAL</name>
<gene>
    <name evidence="1" type="primary">hisE</name>
    <name type="ordered locus">Sala_2380</name>
</gene>
<dbReference type="EC" id="3.6.1.31" evidence="1"/>
<dbReference type="EMBL" id="CP000356">
    <property type="protein sequence ID" value="ABF54089.1"/>
    <property type="molecule type" value="Genomic_DNA"/>
</dbReference>
<dbReference type="RefSeq" id="WP_011542664.1">
    <property type="nucleotide sequence ID" value="NC_008048.1"/>
</dbReference>
<dbReference type="SMR" id="Q1GQI3"/>
<dbReference type="STRING" id="317655.Sala_2380"/>
<dbReference type="KEGG" id="sal:Sala_2380"/>
<dbReference type="eggNOG" id="COG0140">
    <property type="taxonomic scope" value="Bacteria"/>
</dbReference>
<dbReference type="HOGENOM" id="CLU_123337_1_2_5"/>
<dbReference type="OrthoDB" id="9814738at2"/>
<dbReference type="UniPathway" id="UPA00031">
    <property type="reaction ID" value="UER00007"/>
</dbReference>
<dbReference type="Proteomes" id="UP000006578">
    <property type="component" value="Chromosome"/>
</dbReference>
<dbReference type="GO" id="GO:0005737">
    <property type="term" value="C:cytoplasm"/>
    <property type="evidence" value="ECO:0007669"/>
    <property type="project" value="UniProtKB-SubCell"/>
</dbReference>
<dbReference type="GO" id="GO:0005524">
    <property type="term" value="F:ATP binding"/>
    <property type="evidence" value="ECO:0007669"/>
    <property type="project" value="UniProtKB-KW"/>
</dbReference>
<dbReference type="GO" id="GO:0004636">
    <property type="term" value="F:phosphoribosyl-ATP diphosphatase activity"/>
    <property type="evidence" value="ECO:0007669"/>
    <property type="project" value="UniProtKB-UniRule"/>
</dbReference>
<dbReference type="GO" id="GO:0000105">
    <property type="term" value="P:L-histidine biosynthetic process"/>
    <property type="evidence" value="ECO:0007669"/>
    <property type="project" value="UniProtKB-UniRule"/>
</dbReference>
<dbReference type="CDD" id="cd11534">
    <property type="entry name" value="NTP-PPase_HisIE_like"/>
    <property type="match status" value="1"/>
</dbReference>
<dbReference type="Gene3D" id="1.10.287.1080">
    <property type="entry name" value="MazG-like"/>
    <property type="match status" value="1"/>
</dbReference>
<dbReference type="HAMAP" id="MF_01020">
    <property type="entry name" value="HisE"/>
    <property type="match status" value="1"/>
</dbReference>
<dbReference type="InterPro" id="IPR008179">
    <property type="entry name" value="HisE"/>
</dbReference>
<dbReference type="InterPro" id="IPR021130">
    <property type="entry name" value="PRib-ATP_PPHydrolase-like"/>
</dbReference>
<dbReference type="NCBIfam" id="TIGR03188">
    <property type="entry name" value="histidine_hisI"/>
    <property type="match status" value="1"/>
</dbReference>
<dbReference type="NCBIfam" id="NF001611">
    <property type="entry name" value="PRK00400.1-3"/>
    <property type="match status" value="1"/>
</dbReference>
<dbReference type="PANTHER" id="PTHR42945">
    <property type="entry name" value="HISTIDINE BIOSYNTHESIS BIFUNCTIONAL PROTEIN"/>
    <property type="match status" value="1"/>
</dbReference>
<dbReference type="PANTHER" id="PTHR42945:SF9">
    <property type="entry name" value="HISTIDINE BIOSYNTHESIS BIFUNCTIONAL PROTEIN HISIE"/>
    <property type="match status" value="1"/>
</dbReference>
<dbReference type="Pfam" id="PF01503">
    <property type="entry name" value="PRA-PH"/>
    <property type="match status" value="1"/>
</dbReference>
<dbReference type="SUPFAM" id="SSF101386">
    <property type="entry name" value="all-alpha NTP pyrophosphatases"/>
    <property type="match status" value="1"/>
</dbReference>
<keyword id="KW-0028">Amino-acid biosynthesis</keyword>
<keyword id="KW-0067">ATP-binding</keyword>
<keyword id="KW-0963">Cytoplasm</keyword>
<keyword id="KW-0368">Histidine biosynthesis</keyword>
<keyword id="KW-0378">Hydrolase</keyword>
<keyword id="KW-0547">Nucleotide-binding</keyword>
<keyword id="KW-1185">Reference proteome</keyword>
<accession>Q1GQI3</accession>
<reference key="1">
    <citation type="journal article" date="2009" name="Proc. Natl. Acad. Sci. U.S.A.">
        <title>The genomic basis of trophic strategy in marine bacteria.</title>
        <authorList>
            <person name="Lauro F.M."/>
            <person name="McDougald D."/>
            <person name="Thomas T."/>
            <person name="Williams T.J."/>
            <person name="Egan S."/>
            <person name="Rice S."/>
            <person name="DeMaere M.Z."/>
            <person name="Ting L."/>
            <person name="Ertan H."/>
            <person name="Johnson J."/>
            <person name="Ferriera S."/>
            <person name="Lapidus A."/>
            <person name="Anderson I."/>
            <person name="Kyrpides N."/>
            <person name="Munk A.C."/>
            <person name="Detter C."/>
            <person name="Han C.S."/>
            <person name="Brown M.V."/>
            <person name="Robb F.T."/>
            <person name="Kjelleberg S."/>
            <person name="Cavicchioli R."/>
        </authorList>
    </citation>
    <scope>NUCLEOTIDE SEQUENCE [LARGE SCALE GENOMIC DNA]</scope>
    <source>
        <strain>DSM 13593 / LMG 18877 / RB2256</strain>
    </source>
</reference>